<protein>
    <recommendedName>
        <fullName>Inactive chemokine-binding protein</fullName>
        <shortName>vCKBP</shortName>
    </recommendedName>
</protein>
<comment type="function">
    <text evidence="3">The protein is truncated in this vaccinal strain and presumably inactive, because the lack of signal peptide prevents the protein of being secreted. In the wild-type viruses inhibits host immune defense by binding to host chemokines. Binds host CC chemokines (beta chemokines) such as RANTES with high affinity, but not CXC or C chemokines (alpha and gamma chemokines).</text>
</comment>
<comment type="subcellular location">
    <subcellularLocation>
        <location evidence="4">Host cytoplasm</location>
    </subcellularLocation>
    <text>the wild-type protein is secreted, but this strain encodes a truncated form which lacks the signal peptide.</text>
</comment>
<comment type="induction">
    <text evidence="2">Expressed in the early phase of the viral replicative cycle.</text>
</comment>
<comment type="similarity">
    <text evidence="4">Belongs to the orthopoxvirus OPG001 family.</text>
</comment>
<organism>
    <name type="scientific">Vaccinia virus (strain Western Reserve)</name>
    <name type="common">VACV</name>
    <name type="synonym">Vaccinia virus (strain WR)</name>
    <dbReference type="NCBI Taxonomy" id="10254"/>
    <lineage>
        <taxon>Viruses</taxon>
        <taxon>Varidnaviria</taxon>
        <taxon>Bamfordvirae</taxon>
        <taxon>Nucleocytoviricota</taxon>
        <taxon>Pokkesviricetes</taxon>
        <taxon>Chitovirales</taxon>
        <taxon>Poxviridae</taxon>
        <taxon>Chordopoxvirinae</taxon>
        <taxon>Orthopoxvirus</taxon>
        <taxon>Vaccinia virus</taxon>
    </lineage>
</organism>
<dbReference type="EMBL" id="AY243312">
    <property type="protein sequence ID" value="AAO89280.1"/>
    <property type="molecule type" value="Genomic_DNA"/>
</dbReference>
<dbReference type="EMBL" id="AY243312">
    <property type="protein sequence ID" value="AAO89497.1"/>
    <property type="molecule type" value="Genomic_DNA"/>
</dbReference>
<dbReference type="RefSeq" id="YP_232883.1">
    <property type="nucleotide sequence ID" value="NC_006998.1"/>
</dbReference>
<dbReference type="RefSeq" id="YP_233100.1">
    <property type="nucleotide sequence ID" value="NC_006998.1"/>
</dbReference>
<dbReference type="BMRB" id="Q805H7"/>
<dbReference type="SMR" id="Q805H7"/>
<dbReference type="DNASU" id="3707615"/>
<dbReference type="GeneID" id="3707615"/>
<dbReference type="GeneID" id="3707616"/>
<dbReference type="KEGG" id="vg:3707615"/>
<dbReference type="KEGG" id="vg:3707616"/>
<dbReference type="Proteomes" id="UP000000344">
    <property type="component" value="Genome"/>
</dbReference>
<dbReference type="GO" id="GO:0030430">
    <property type="term" value="C:host cell cytoplasm"/>
    <property type="evidence" value="ECO:0007669"/>
    <property type="project" value="UniProtKB-SubCell"/>
</dbReference>
<dbReference type="Gene3D" id="2.60.240.10">
    <property type="entry name" value="Major secreted virus protein"/>
    <property type="match status" value="1"/>
</dbReference>
<dbReference type="InterPro" id="IPR009173">
    <property type="entry name" value="Chemkine-bd_vir"/>
</dbReference>
<dbReference type="InterPro" id="IPR003184">
    <property type="entry name" value="Orthopox_35kDa"/>
</dbReference>
<dbReference type="InterPro" id="IPR036540">
    <property type="entry name" value="Pox_vCCI-like_sf"/>
</dbReference>
<dbReference type="Pfam" id="PF02250">
    <property type="entry name" value="Orthopox_35kD"/>
    <property type="match status" value="1"/>
</dbReference>
<dbReference type="PIRSF" id="PIRSF003696">
    <property type="entry name" value="VAC_C23L"/>
    <property type="match status" value="1"/>
</dbReference>
<dbReference type="SUPFAM" id="SSF49889">
    <property type="entry name" value="Soluble secreted chemokine inhibitor, VCCI"/>
    <property type="match status" value="1"/>
</dbReference>
<evidence type="ECO:0000256" key="1">
    <source>
        <dbReference type="SAM" id="MobiDB-lite"/>
    </source>
</evidence>
<evidence type="ECO:0000269" key="2">
    <source>
    </source>
</evidence>
<evidence type="ECO:0000269" key="3">
    <source>
    </source>
</evidence>
<evidence type="ECO:0000305" key="4"/>
<reference key="1">
    <citation type="submission" date="2003-02" db="EMBL/GenBank/DDBJ databases">
        <title>Sequencing of the coding region of Vaccinia-WR to an average 9-fold redundancy and an error rate of 0.16/10kb.</title>
        <authorList>
            <person name="Esposito J.J."/>
            <person name="Frace A.M."/>
            <person name="Sammons S.A."/>
            <person name="Olsen-Rasmussen M."/>
            <person name="Osborne J."/>
            <person name="Wohlhueter R."/>
        </authorList>
    </citation>
    <scope>NUCLEOTIDE SEQUENCE [GENOMIC DNA]</scope>
</reference>
<reference key="2">
    <citation type="journal article" date="1998" name="J. Immunol.">
        <title>Blockade of chemokine activity by a soluble chemokine binding protein from vaccinia virus.</title>
        <authorList>
            <person name="Alcami A."/>
            <person name="Symons J.A."/>
            <person name="Collins P.D."/>
            <person name="Williams T.J."/>
            <person name="Smith G.L."/>
        </authorList>
    </citation>
    <scope>CHARACTERIZATION</scope>
    <scope>FUNCTION</scope>
    <scope>CHEMOKINE-BINDING</scope>
</reference>
<reference key="3">
    <citation type="journal article" date="2015" name="J. Virol.">
        <title>Deciphering poxvirus gene expression by RNA sequencing and ribosome profiling.</title>
        <authorList>
            <person name="Yang Z."/>
            <person name="Cao S."/>
            <person name="Martens C.A."/>
            <person name="Porcella S.F."/>
            <person name="Xie Z."/>
            <person name="Ma M."/>
            <person name="Shen B."/>
            <person name="Moss B."/>
        </authorList>
    </citation>
    <scope>INDUCTION</scope>
</reference>
<proteinExistence type="evidence at protein level"/>
<keyword id="KW-0244">Early protein</keyword>
<keyword id="KW-1035">Host cytoplasm</keyword>
<keyword id="KW-1185">Reference proteome</keyword>
<name>PG001_VACCW</name>
<feature type="chain" id="PRO_0000412904" description="Inactive chemokine-binding protein">
    <location>
        <begin position="1"/>
        <end position="244"/>
    </location>
</feature>
<feature type="region of interest" description="Disordered" evidence="1">
    <location>
        <begin position="1"/>
        <end position="79"/>
    </location>
</feature>
<feature type="compositionally biased region" description="Polar residues" evidence="1">
    <location>
        <begin position="37"/>
        <end position="53"/>
    </location>
</feature>
<feature type="compositionally biased region" description="Acidic residues" evidence="1">
    <location>
        <begin position="54"/>
        <end position="77"/>
    </location>
</feature>
<accession>Q805H7</accession>
<sequence>MHVPASLQQSSSSSSSCTEEENKHHMGIDVIIKVTKQDQTPTNDKICQSVTEITESESDPDPEVESEDDSTSVEDVDPPTTYYSIIGGGLRMNFGFTKCPQIKSISESADGNTVNARLSSVSPGQGKDSPAITHEEALAMIKDCEVSIDIRCSEEEKDSDIKTHPVLGSNISHKKVSYEDIIGSTIVDTKCVKNLEFSVRIGDMCKESSELEVKDGFKYVDGSASEGATDDTSLIDSTKLKACV</sequence>
<gene>
    <name type="primary">OPG001</name>
    <name type="synonym">B29R</name>
    <name type="synonym">C23L</name>
    <name type="ordered locus">VACWR001</name>
    <name type="ordered locus">VACWR218</name>
</gene>
<organismHost>
    <name type="scientific">Bos taurus</name>
    <name type="common">Bovine</name>
    <dbReference type="NCBI Taxonomy" id="9913"/>
</organismHost>